<dbReference type="EC" id="3.2.1.55"/>
<dbReference type="EMBL" id="CH476604">
    <property type="protein sequence ID" value="EAU32201.1"/>
    <property type="molecule type" value="Genomic_DNA"/>
</dbReference>
<dbReference type="RefSeq" id="XP_001216560.1">
    <property type="nucleotide sequence ID" value="XM_001216560.1"/>
</dbReference>
<dbReference type="SMR" id="Q0CEE5"/>
<dbReference type="STRING" id="341663.Q0CEE5"/>
<dbReference type="GlyCosmos" id="Q0CEE5">
    <property type="glycosylation" value="2 sites, No reported glycans"/>
</dbReference>
<dbReference type="EnsemblFungi" id="EAU32201">
    <property type="protein sequence ID" value="EAU32201"/>
    <property type="gene ID" value="ATEG_07939"/>
</dbReference>
<dbReference type="GeneID" id="4322793"/>
<dbReference type="VEuPathDB" id="FungiDB:ATEG_07939"/>
<dbReference type="eggNOG" id="ENOG502QS3Q">
    <property type="taxonomic scope" value="Eukaryota"/>
</dbReference>
<dbReference type="HOGENOM" id="CLU_029332_3_0_1"/>
<dbReference type="OMA" id="WNYPTRY"/>
<dbReference type="OrthoDB" id="157622at2759"/>
<dbReference type="UniPathway" id="UPA00667"/>
<dbReference type="Proteomes" id="UP000007963">
    <property type="component" value="Unassembled WGS sequence"/>
</dbReference>
<dbReference type="GO" id="GO:0005576">
    <property type="term" value="C:extracellular region"/>
    <property type="evidence" value="ECO:0000250"/>
    <property type="project" value="UniProtKB"/>
</dbReference>
<dbReference type="GO" id="GO:0046556">
    <property type="term" value="F:alpha-L-arabinofuranosidase activity"/>
    <property type="evidence" value="ECO:0000250"/>
    <property type="project" value="UniProtKB"/>
</dbReference>
<dbReference type="GO" id="GO:0031222">
    <property type="term" value="P:arabinan catabolic process"/>
    <property type="evidence" value="ECO:0007669"/>
    <property type="project" value="UniProtKB-UniPathway"/>
</dbReference>
<dbReference type="GO" id="GO:0019566">
    <property type="term" value="P:arabinose metabolic process"/>
    <property type="evidence" value="ECO:0000250"/>
    <property type="project" value="UniProtKB"/>
</dbReference>
<dbReference type="GO" id="GO:0046373">
    <property type="term" value="P:L-arabinose metabolic process"/>
    <property type="evidence" value="ECO:0007669"/>
    <property type="project" value="InterPro"/>
</dbReference>
<dbReference type="GO" id="GO:0045490">
    <property type="term" value="P:pectin catabolic process"/>
    <property type="evidence" value="ECO:0007669"/>
    <property type="project" value="TreeGrafter"/>
</dbReference>
<dbReference type="GO" id="GO:0045493">
    <property type="term" value="P:xylan catabolic process"/>
    <property type="evidence" value="ECO:0007669"/>
    <property type="project" value="UniProtKB-KW"/>
</dbReference>
<dbReference type="CDD" id="cd23399">
    <property type="entry name" value="beta-trefoil_ABD_ABFB"/>
    <property type="match status" value="1"/>
</dbReference>
<dbReference type="FunFam" id="2.60.120.200:FF:000131">
    <property type="entry name" value="Probable alpha-L-arabinofuranosidase B"/>
    <property type="match status" value="1"/>
</dbReference>
<dbReference type="FunFam" id="2.80.10.50:FF:000059">
    <property type="entry name" value="Probable alpha-L-arabinofuranosidase B"/>
    <property type="match status" value="1"/>
</dbReference>
<dbReference type="Gene3D" id="2.60.120.200">
    <property type="match status" value="1"/>
</dbReference>
<dbReference type="Gene3D" id="2.80.10.50">
    <property type="match status" value="1"/>
</dbReference>
<dbReference type="InterPro" id="IPR015289">
    <property type="entry name" value="A-L-arabinofuranosidase_B_cat"/>
</dbReference>
<dbReference type="InterPro" id="IPR038964">
    <property type="entry name" value="ABFB"/>
</dbReference>
<dbReference type="InterPro" id="IPR007934">
    <property type="entry name" value="AbfB_ABD"/>
</dbReference>
<dbReference type="InterPro" id="IPR036195">
    <property type="entry name" value="AbfB_ABD_sf"/>
</dbReference>
<dbReference type="InterPro" id="IPR013320">
    <property type="entry name" value="ConA-like_dom_sf"/>
</dbReference>
<dbReference type="PANTHER" id="PTHR39447">
    <property type="entry name" value="ALPHA-L-ARABINOFURANOSIDASE B"/>
    <property type="match status" value="1"/>
</dbReference>
<dbReference type="PANTHER" id="PTHR39447:SF2">
    <property type="entry name" value="ALPHA-L-ARABINOFURANOSIDASE B"/>
    <property type="match status" value="1"/>
</dbReference>
<dbReference type="Pfam" id="PF05270">
    <property type="entry name" value="AbfB"/>
    <property type="match status" value="1"/>
</dbReference>
<dbReference type="Pfam" id="PF09206">
    <property type="entry name" value="ArabFuran-catal"/>
    <property type="match status" value="1"/>
</dbReference>
<dbReference type="SUPFAM" id="SSF110221">
    <property type="entry name" value="AbfB domain"/>
    <property type="match status" value="1"/>
</dbReference>
<dbReference type="SUPFAM" id="SSF49899">
    <property type="entry name" value="Concanavalin A-like lectins/glucanases"/>
    <property type="match status" value="1"/>
</dbReference>
<accession>Q0CEE5</accession>
<organism>
    <name type="scientific">Aspergillus terreus (strain NIH 2624 / FGSC A1156)</name>
    <dbReference type="NCBI Taxonomy" id="341663"/>
    <lineage>
        <taxon>Eukaryota</taxon>
        <taxon>Fungi</taxon>
        <taxon>Dikarya</taxon>
        <taxon>Ascomycota</taxon>
        <taxon>Pezizomycotina</taxon>
        <taxon>Eurotiomycetes</taxon>
        <taxon>Eurotiomycetidae</taxon>
        <taxon>Eurotiales</taxon>
        <taxon>Aspergillaceae</taxon>
        <taxon>Aspergillus</taxon>
        <taxon>Aspergillus subgen. Circumdati</taxon>
    </lineage>
</organism>
<evidence type="ECO:0000250" key="1"/>
<evidence type="ECO:0000250" key="2">
    <source>
        <dbReference type="UniProtKB" id="Q8NK89"/>
    </source>
</evidence>
<evidence type="ECO:0000255" key="3"/>
<evidence type="ECO:0000305" key="4"/>
<name>ABFB_ASPTN</name>
<comment type="function">
    <text evidence="1">Alpha-L-arabinofuranosidase involved in the degradation of arabinoxylan, a major component of plant hemicellulose. Able to hydrolyze 1,5-, 1,3- and 1,2-alpha-linkages not only in L-arabinofuranosyl oligosaccharides, but also in polysaccharides containing terminal non-reducing L-arabinofuranoses in side chains, like L-arabinan, arabinogalactan and arabinoxylan (By similarity).</text>
</comment>
<comment type="catalytic activity">
    <reaction>
        <text>Hydrolysis of terminal non-reducing alpha-L-arabinofuranoside residues in alpha-L-arabinosides.</text>
        <dbReference type="EC" id="3.2.1.55"/>
    </reaction>
</comment>
<comment type="pathway">
    <text>Glycan metabolism; L-arabinan degradation.</text>
</comment>
<comment type="subcellular location">
    <subcellularLocation>
        <location evidence="1">Secreted</location>
    </subcellularLocation>
</comment>
<comment type="domain">
    <text evidence="1">Organized into two domains: an N-terminal catalytic domain and a C-terminal arabinose-binding domain (ABD).</text>
</comment>
<comment type="similarity">
    <text evidence="4">Belongs to the glycosyl hydrolase 54 family.</text>
</comment>
<feature type="signal peptide" evidence="3">
    <location>
        <begin position="1"/>
        <end position="26"/>
    </location>
</feature>
<feature type="chain" id="PRO_0000394608" description="Probable alpha-L-arabinofuranosidase B">
    <location>
        <begin position="27"/>
        <end position="506"/>
    </location>
</feature>
<feature type="region of interest" description="Catalytic" evidence="1">
    <location>
        <begin position="27"/>
        <end position="343"/>
    </location>
</feature>
<feature type="region of interest" description="ABD" evidence="1">
    <location>
        <begin position="344"/>
        <end position="506"/>
    </location>
</feature>
<feature type="active site" description="Nucleophile" evidence="1">
    <location>
        <position position="229"/>
    </location>
</feature>
<feature type="active site" description="Proton donor" evidence="1">
    <location>
        <position position="305"/>
    </location>
</feature>
<feature type="binding site" evidence="2">
    <location>
        <position position="227"/>
    </location>
    <ligand>
        <name>substrate</name>
    </ligand>
</feature>
<feature type="binding site" evidence="2">
    <location>
        <position position="230"/>
    </location>
    <ligand>
        <name>substrate</name>
    </ligand>
</feature>
<feature type="binding site" evidence="2">
    <location>
        <position position="304"/>
    </location>
    <ligand>
        <name>substrate</name>
    </ligand>
</feature>
<feature type="binding site" evidence="2">
    <location>
        <position position="424"/>
    </location>
    <ligand>
        <name>substrate</name>
    </ligand>
</feature>
<feature type="binding site" evidence="2">
    <location>
        <position position="427"/>
    </location>
    <ligand>
        <name>substrate</name>
    </ligand>
</feature>
<feature type="binding site" evidence="2">
    <location>
        <position position="443"/>
    </location>
    <ligand>
        <name>substrate</name>
    </ligand>
</feature>
<feature type="binding site" evidence="2">
    <location>
        <position position="471"/>
    </location>
    <ligand>
        <name>substrate</name>
    </ligand>
</feature>
<feature type="binding site" evidence="2">
    <location>
        <position position="476"/>
    </location>
    <ligand>
        <name>substrate</name>
    </ligand>
</feature>
<feature type="binding site" evidence="2">
    <location>
        <position position="496"/>
    </location>
    <ligand>
        <name>substrate</name>
    </ligand>
</feature>
<feature type="site" description="Cis-peptide bond" evidence="2">
    <location>
        <begin position="184"/>
        <end position="185"/>
    </location>
</feature>
<feature type="glycosylation site" description="N-linked (GlcNAc...) asparagine" evidence="3">
    <location>
        <position position="285"/>
    </location>
</feature>
<feature type="glycosylation site" description="N-linked (GlcNAc...) asparagine" evidence="3">
    <location>
        <position position="375"/>
    </location>
</feature>
<feature type="disulfide bond" evidence="2">
    <location>
        <begin position="29"/>
        <end position="39"/>
    </location>
</feature>
<feature type="disulfide bond" evidence="2">
    <location>
        <begin position="89"/>
        <end position="94"/>
    </location>
</feature>
<feature type="disulfide bond" evidence="2">
    <location>
        <begin position="184"/>
        <end position="185"/>
    </location>
</feature>
<feature type="disulfide bond" evidence="2">
    <location>
        <begin position="409"/>
        <end position="447"/>
    </location>
</feature>
<reference key="1">
    <citation type="submission" date="2005-09" db="EMBL/GenBank/DDBJ databases">
        <title>Annotation of the Aspergillus terreus NIH2624 genome.</title>
        <authorList>
            <person name="Birren B.W."/>
            <person name="Lander E.S."/>
            <person name="Galagan J.E."/>
            <person name="Nusbaum C."/>
            <person name="Devon K."/>
            <person name="Henn M."/>
            <person name="Ma L.-J."/>
            <person name="Jaffe D.B."/>
            <person name="Butler J."/>
            <person name="Alvarez P."/>
            <person name="Gnerre S."/>
            <person name="Grabherr M."/>
            <person name="Kleber M."/>
            <person name="Mauceli E.W."/>
            <person name="Brockman W."/>
            <person name="Rounsley S."/>
            <person name="Young S.K."/>
            <person name="LaButti K."/>
            <person name="Pushparaj V."/>
            <person name="DeCaprio D."/>
            <person name="Crawford M."/>
            <person name="Koehrsen M."/>
            <person name="Engels R."/>
            <person name="Montgomery P."/>
            <person name="Pearson M."/>
            <person name="Howarth C."/>
            <person name="Larson L."/>
            <person name="Luoma S."/>
            <person name="White J."/>
            <person name="Alvarado L."/>
            <person name="Kodira C.D."/>
            <person name="Zeng Q."/>
            <person name="Oleary S."/>
            <person name="Yandava C."/>
            <person name="Denning D.W."/>
            <person name="Nierman W.C."/>
            <person name="Milne T."/>
            <person name="Madden K."/>
        </authorList>
    </citation>
    <scope>NUCLEOTIDE SEQUENCE [LARGE SCALE GENOMIC DNA]</scope>
    <source>
        <strain>NIH 2624 / FGSC A1156</strain>
    </source>
</reference>
<sequence>MLLPRGFNRAVVTALGVVGTGTLVAAGPCDIYSSGGTPCVAAHSTTRALYSAYTGPLYQVKRGSDGATTNIAPLSAGGVANAAAQDSFCAGTTCLITIIYDQSGRGNHLTQAPPGGFKGPEANGYDNLASAIGAPVTLNGQKAYGVFISPGTGYRNNAASGTATGDAPEGMYAVLDGTHYNGGCCFDYGNAETSSTDTGNGHMEAIYFGDNTVWGSGSGSGPWIMADLENGLFSGSSTKNNAGDPSVSYRFLTAIVKGKPNQWAIRGANAASGSLSTYYNGARPNASGYNPMSKEGAIILGIGGDNSIGAQGTFYEGVMTSGYPSDATENSVQANIVAAKYAVAPLTSGPSLTVGSSISLRATTSCCTTRYLAHNGSTVNTQVVSSSSSTALKQQASWTVRAGLANSACFSFESKDTPGSFIRHYDFVLQLSANDGTKQFYEDATFCPQSGLNGQGSSIRSWNYPTRYFRHYNNVLYAASNGGVHTFDATGSFNDDVSWVVSTSFA</sequence>
<protein>
    <recommendedName>
        <fullName>Probable alpha-L-arabinofuranosidase B</fullName>
        <shortName>ABF B</shortName>
        <shortName>Arabinosidase B</shortName>
        <ecNumber>3.2.1.55</ecNumber>
    </recommendedName>
</protein>
<keyword id="KW-0119">Carbohydrate metabolism</keyword>
<keyword id="KW-1015">Disulfide bond</keyword>
<keyword id="KW-0325">Glycoprotein</keyword>
<keyword id="KW-0326">Glycosidase</keyword>
<keyword id="KW-0378">Hydrolase</keyword>
<keyword id="KW-0624">Polysaccharide degradation</keyword>
<keyword id="KW-1185">Reference proteome</keyword>
<keyword id="KW-0964">Secreted</keyword>
<keyword id="KW-0732">Signal</keyword>
<keyword id="KW-0858">Xylan degradation</keyword>
<gene>
    <name type="primary">abfB</name>
    <name type="ORF">ATEG_07939</name>
</gene>
<proteinExistence type="inferred from homology"/>